<dbReference type="EMBL" id="AE001363">
    <property type="protein sequence ID" value="AAD18231.1"/>
    <property type="molecule type" value="Genomic_DNA"/>
</dbReference>
<dbReference type="EMBL" id="AE002161">
    <property type="protein sequence ID" value="AAF38505.1"/>
    <property type="molecule type" value="Genomic_DNA"/>
</dbReference>
<dbReference type="EMBL" id="BA000008">
    <property type="protein sequence ID" value="BAA98288.1"/>
    <property type="molecule type" value="Genomic_DNA"/>
</dbReference>
<dbReference type="EMBL" id="AE009440">
    <property type="protein sequence ID" value="AAP98011.1"/>
    <property type="molecule type" value="Genomic_DNA"/>
</dbReference>
<dbReference type="PIR" id="A72122">
    <property type="entry name" value="A72122"/>
</dbReference>
<dbReference type="PIR" id="F86500">
    <property type="entry name" value="F86500"/>
</dbReference>
<dbReference type="RefSeq" id="NP_224286.1">
    <property type="nucleotide sequence ID" value="NC_000922.1"/>
</dbReference>
<dbReference type="RefSeq" id="WP_010882728.1">
    <property type="nucleotide sequence ID" value="NZ_LN847257.1"/>
</dbReference>
<dbReference type="SMR" id="Q9Z9A3"/>
<dbReference type="STRING" id="406984.CPK_ORF00586"/>
<dbReference type="GeneID" id="45050123"/>
<dbReference type="KEGG" id="cpa:CP_0697"/>
<dbReference type="KEGG" id="cpj:rl1"/>
<dbReference type="KEGG" id="cpn:CPn_0078"/>
<dbReference type="KEGG" id="cpt:CpB0078"/>
<dbReference type="PATRIC" id="fig|115713.3.peg.89"/>
<dbReference type="eggNOG" id="COG0081">
    <property type="taxonomic scope" value="Bacteria"/>
</dbReference>
<dbReference type="HOGENOM" id="CLU_062853_0_0_0"/>
<dbReference type="OrthoDB" id="9803740at2"/>
<dbReference type="Proteomes" id="UP000000583">
    <property type="component" value="Chromosome"/>
</dbReference>
<dbReference type="Proteomes" id="UP000000801">
    <property type="component" value="Chromosome"/>
</dbReference>
<dbReference type="GO" id="GO:0015934">
    <property type="term" value="C:large ribosomal subunit"/>
    <property type="evidence" value="ECO:0007669"/>
    <property type="project" value="InterPro"/>
</dbReference>
<dbReference type="GO" id="GO:0019843">
    <property type="term" value="F:rRNA binding"/>
    <property type="evidence" value="ECO:0007669"/>
    <property type="project" value="UniProtKB-UniRule"/>
</dbReference>
<dbReference type="GO" id="GO:0003735">
    <property type="term" value="F:structural constituent of ribosome"/>
    <property type="evidence" value="ECO:0007669"/>
    <property type="project" value="InterPro"/>
</dbReference>
<dbReference type="GO" id="GO:0000049">
    <property type="term" value="F:tRNA binding"/>
    <property type="evidence" value="ECO:0007669"/>
    <property type="project" value="UniProtKB-KW"/>
</dbReference>
<dbReference type="GO" id="GO:0006417">
    <property type="term" value="P:regulation of translation"/>
    <property type="evidence" value="ECO:0007669"/>
    <property type="project" value="UniProtKB-KW"/>
</dbReference>
<dbReference type="GO" id="GO:0006412">
    <property type="term" value="P:translation"/>
    <property type="evidence" value="ECO:0007669"/>
    <property type="project" value="UniProtKB-UniRule"/>
</dbReference>
<dbReference type="CDD" id="cd00403">
    <property type="entry name" value="Ribosomal_L1"/>
    <property type="match status" value="1"/>
</dbReference>
<dbReference type="FunFam" id="3.40.50.790:FF:000001">
    <property type="entry name" value="50S ribosomal protein L1"/>
    <property type="match status" value="1"/>
</dbReference>
<dbReference type="Gene3D" id="3.30.190.20">
    <property type="match status" value="1"/>
</dbReference>
<dbReference type="Gene3D" id="3.40.50.790">
    <property type="match status" value="1"/>
</dbReference>
<dbReference type="HAMAP" id="MF_01318_B">
    <property type="entry name" value="Ribosomal_uL1_B"/>
    <property type="match status" value="1"/>
</dbReference>
<dbReference type="InterPro" id="IPR005878">
    <property type="entry name" value="Ribosom_uL1_bac-type"/>
</dbReference>
<dbReference type="InterPro" id="IPR002143">
    <property type="entry name" value="Ribosomal_uL1"/>
</dbReference>
<dbReference type="InterPro" id="IPR023674">
    <property type="entry name" value="Ribosomal_uL1-like"/>
</dbReference>
<dbReference type="InterPro" id="IPR028364">
    <property type="entry name" value="Ribosomal_uL1/biogenesis"/>
</dbReference>
<dbReference type="InterPro" id="IPR016095">
    <property type="entry name" value="Ribosomal_uL1_3-a/b-sand"/>
</dbReference>
<dbReference type="InterPro" id="IPR023673">
    <property type="entry name" value="Ribosomal_uL1_CS"/>
</dbReference>
<dbReference type="NCBIfam" id="TIGR01169">
    <property type="entry name" value="rplA_bact"/>
    <property type="match status" value="1"/>
</dbReference>
<dbReference type="PANTHER" id="PTHR36427">
    <property type="entry name" value="54S RIBOSOMAL PROTEIN L1, MITOCHONDRIAL"/>
    <property type="match status" value="1"/>
</dbReference>
<dbReference type="PANTHER" id="PTHR36427:SF3">
    <property type="entry name" value="LARGE RIBOSOMAL SUBUNIT PROTEIN UL1M"/>
    <property type="match status" value="1"/>
</dbReference>
<dbReference type="Pfam" id="PF00687">
    <property type="entry name" value="Ribosomal_L1"/>
    <property type="match status" value="1"/>
</dbReference>
<dbReference type="PIRSF" id="PIRSF002155">
    <property type="entry name" value="Ribosomal_L1"/>
    <property type="match status" value="1"/>
</dbReference>
<dbReference type="SUPFAM" id="SSF56808">
    <property type="entry name" value="Ribosomal protein L1"/>
    <property type="match status" value="1"/>
</dbReference>
<dbReference type="PROSITE" id="PS01199">
    <property type="entry name" value="RIBOSOMAL_L1"/>
    <property type="match status" value="1"/>
</dbReference>
<name>RL1_CHLPN</name>
<keyword id="KW-0678">Repressor</keyword>
<keyword id="KW-0687">Ribonucleoprotein</keyword>
<keyword id="KW-0689">Ribosomal protein</keyword>
<keyword id="KW-0694">RNA-binding</keyword>
<keyword id="KW-0699">rRNA-binding</keyword>
<keyword id="KW-0810">Translation regulation</keyword>
<keyword id="KW-0820">tRNA-binding</keyword>
<reference key="1">
    <citation type="journal article" date="1999" name="Nat. Genet.">
        <title>Comparative genomes of Chlamydia pneumoniae and C. trachomatis.</title>
        <authorList>
            <person name="Kalman S."/>
            <person name="Mitchell W.P."/>
            <person name="Marathe R."/>
            <person name="Lammel C.J."/>
            <person name="Fan J."/>
            <person name="Hyman R.W."/>
            <person name="Olinger L."/>
            <person name="Grimwood J."/>
            <person name="Davis R.W."/>
            <person name="Stephens R.S."/>
        </authorList>
    </citation>
    <scope>NUCLEOTIDE SEQUENCE [LARGE SCALE GENOMIC DNA]</scope>
    <source>
        <strain>CWL029</strain>
    </source>
</reference>
<reference key="2">
    <citation type="journal article" date="2000" name="Nucleic Acids Res.">
        <title>Genome sequences of Chlamydia trachomatis MoPn and Chlamydia pneumoniae AR39.</title>
        <authorList>
            <person name="Read T.D."/>
            <person name="Brunham R.C."/>
            <person name="Shen C."/>
            <person name="Gill S.R."/>
            <person name="Heidelberg J.F."/>
            <person name="White O."/>
            <person name="Hickey E.K."/>
            <person name="Peterson J.D."/>
            <person name="Utterback T.R."/>
            <person name="Berry K.J."/>
            <person name="Bass S."/>
            <person name="Linher K.D."/>
            <person name="Weidman J.F."/>
            <person name="Khouri H.M."/>
            <person name="Craven B."/>
            <person name="Bowman C."/>
            <person name="Dodson R.J."/>
            <person name="Gwinn M.L."/>
            <person name="Nelson W.C."/>
            <person name="DeBoy R.T."/>
            <person name="Kolonay J.F."/>
            <person name="McClarty G."/>
            <person name="Salzberg S.L."/>
            <person name="Eisen J.A."/>
            <person name="Fraser C.M."/>
        </authorList>
    </citation>
    <scope>NUCLEOTIDE SEQUENCE [LARGE SCALE GENOMIC DNA]</scope>
    <source>
        <strain>AR39</strain>
    </source>
</reference>
<reference key="3">
    <citation type="journal article" date="2000" name="Nucleic Acids Res.">
        <title>Comparison of whole genome sequences of Chlamydia pneumoniae J138 from Japan and CWL029 from USA.</title>
        <authorList>
            <person name="Shirai M."/>
            <person name="Hirakawa H."/>
            <person name="Kimoto M."/>
            <person name="Tabuchi M."/>
            <person name="Kishi F."/>
            <person name="Ouchi K."/>
            <person name="Shiba T."/>
            <person name="Ishii K."/>
            <person name="Hattori M."/>
            <person name="Kuhara S."/>
            <person name="Nakazawa T."/>
        </authorList>
    </citation>
    <scope>NUCLEOTIDE SEQUENCE [LARGE SCALE GENOMIC DNA]</scope>
    <source>
        <strain>J138</strain>
    </source>
</reference>
<reference key="4">
    <citation type="submission" date="2002-05" db="EMBL/GenBank/DDBJ databases">
        <title>The genome sequence of Chlamydia pneumoniae TW183 and comparison with other Chlamydia strains based on whole genome sequence analysis.</title>
        <authorList>
            <person name="Geng M.M."/>
            <person name="Schuhmacher A."/>
            <person name="Muehldorfer I."/>
            <person name="Bensch K.W."/>
            <person name="Schaefer K.P."/>
            <person name="Schneider S."/>
            <person name="Pohl T."/>
            <person name="Essig A."/>
            <person name="Marre R."/>
            <person name="Melchers K."/>
        </authorList>
    </citation>
    <scope>NUCLEOTIDE SEQUENCE [LARGE SCALE GENOMIC DNA]</scope>
    <source>
        <strain>TW-183</strain>
    </source>
</reference>
<proteinExistence type="inferred from homology"/>
<evidence type="ECO:0000255" key="1">
    <source>
        <dbReference type="HAMAP-Rule" id="MF_01318"/>
    </source>
</evidence>
<evidence type="ECO:0000305" key="2"/>
<organism>
    <name type="scientific">Chlamydia pneumoniae</name>
    <name type="common">Chlamydophila pneumoniae</name>
    <dbReference type="NCBI Taxonomy" id="83558"/>
    <lineage>
        <taxon>Bacteria</taxon>
        <taxon>Pseudomonadati</taxon>
        <taxon>Chlamydiota</taxon>
        <taxon>Chlamydiia</taxon>
        <taxon>Chlamydiales</taxon>
        <taxon>Chlamydiaceae</taxon>
        <taxon>Chlamydia/Chlamydophila group</taxon>
        <taxon>Chlamydia</taxon>
    </lineage>
</organism>
<comment type="function">
    <text evidence="1">Binds directly to 23S rRNA. The L1 stalk is quite mobile in the ribosome, and is involved in E site tRNA release.</text>
</comment>
<comment type="function">
    <text evidence="1">Protein L1 is also a translational repressor protein, it controls the translation of the L11 operon by binding to its mRNA.</text>
</comment>
<comment type="subunit">
    <text evidence="1">Part of the 50S ribosomal subunit.</text>
</comment>
<comment type="similarity">
    <text evidence="1">Belongs to the universal ribosomal protein uL1 family.</text>
</comment>
<accession>Q9Z9A3</accession>
<accession>Q9JQ30</accession>
<protein>
    <recommendedName>
        <fullName evidence="1">Large ribosomal subunit protein uL1</fullName>
    </recommendedName>
    <alternativeName>
        <fullName evidence="2">50S ribosomal protein L1</fullName>
    </alternativeName>
</protein>
<feature type="chain" id="PRO_0000125640" description="Large ribosomal subunit protein uL1">
    <location>
        <begin position="1"/>
        <end position="232"/>
    </location>
</feature>
<gene>
    <name evidence="1" type="primary">rplA</name>
    <name type="synonym">rl1</name>
    <name type="ordered locus">CPn_0078</name>
    <name type="ordered locus">CP_0697</name>
    <name type="ordered locus">CpB0078</name>
</gene>
<sequence>MTKHGKRIRGILKNYDFSKSYSLREAIDILKQCPPVRFDQTVDVSIKLGIDPKKSDQQIRGAVFLPNGTGKTLRILVFASGNKVKEAVEAGADFMGSDDLVEKIKSGWLEFDVAVATPDMMREVGKLGKVLGPRNLMPTPKTGTVTTDVAKAISELRKGKIEFKADRAGVCNVGVGKLSFESSQIKENIEALSSALIKAKPPAAKGQYLVSFTISSTMGPGISIDTRELMAS</sequence>